<gene>
    <name evidence="1" type="primary">cyoE1</name>
    <name type="ordered locus">Swoo_0170</name>
</gene>
<name>CYOE1_SHEWM</name>
<dbReference type="EC" id="2.5.1.141" evidence="1"/>
<dbReference type="EMBL" id="CP000961">
    <property type="protein sequence ID" value="ACA84471.1"/>
    <property type="molecule type" value="Genomic_DNA"/>
</dbReference>
<dbReference type="RefSeq" id="WP_012322820.1">
    <property type="nucleotide sequence ID" value="NC_010506.1"/>
</dbReference>
<dbReference type="SMR" id="B1KM58"/>
<dbReference type="STRING" id="392500.Swoo_0170"/>
<dbReference type="KEGG" id="swd:Swoo_0170"/>
<dbReference type="eggNOG" id="COG0109">
    <property type="taxonomic scope" value="Bacteria"/>
</dbReference>
<dbReference type="HOGENOM" id="CLU_029631_0_2_6"/>
<dbReference type="UniPathway" id="UPA00834">
    <property type="reaction ID" value="UER00712"/>
</dbReference>
<dbReference type="Proteomes" id="UP000002168">
    <property type="component" value="Chromosome"/>
</dbReference>
<dbReference type="GO" id="GO:0005886">
    <property type="term" value="C:plasma membrane"/>
    <property type="evidence" value="ECO:0007669"/>
    <property type="project" value="UniProtKB-SubCell"/>
</dbReference>
<dbReference type="GO" id="GO:0008495">
    <property type="term" value="F:protoheme IX farnesyltransferase activity"/>
    <property type="evidence" value="ECO:0007669"/>
    <property type="project" value="UniProtKB-UniRule"/>
</dbReference>
<dbReference type="GO" id="GO:0048034">
    <property type="term" value="P:heme O biosynthetic process"/>
    <property type="evidence" value="ECO:0007669"/>
    <property type="project" value="UniProtKB-UniRule"/>
</dbReference>
<dbReference type="CDD" id="cd13957">
    <property type="entry name" value="PT_UbiA_Cox10"/>
    <property type="match status" value="1"/>
</dbReference>
<dbReference type="FunFam" id="1.10.357.140:FF:000001">
    <property type="entry name" value="Protoheme IX farnesyltransferase"/>
    <property type="match status" value="1"/>
</dbReference>
<dbReference type="Gene3D" id="1.10.357.140">
    <property type="entry name" value="UbiA prenyltransferase"/>
    <property type="match status" value="1"/>
</dbReference>
<dbReference type="HAMAP" id="MF_00154">
    <property type="entry name" value="CyoE_CtaB"/>
    <property type="match status" value="1"/>
</dbReference>
<dbReference type="InterPro" id="IPR006369">
    <property type="entry name" value="Protohaem_IX_farnesylTrfase"/>
</dbReference>
<dbReference type="InterPro" id="IPR000537">
    <property type="entry name" value="UbiA_prenyltransferase"/>
</dbReference>
<dbReference type="InterPro" id="IPR030470">
    <property type="entry name" value="UbiA_prenylTrfase_CS"/>
</dbReference>
<dbReference type="InterPro" id="IPR044878">
    <property type="entry name" value="UbiA_sf"/>
</dbReference>
<dbReference type="NCBIfam" id="TIGR01473">
    <property type="entry name" value="cyoE_ctaB"/>
    <property type="match status" value="1"/>
</dbReference>
<dbReference type="NCBIfam" id="NF003349">
    <property type="entry name" value="PRK04375.1-2"/>
    <property type="match status" value="1"/>
</dbReference>
<dbReference type="PANTHER" id="PTHR43448:SF7">
    <property type="entry name" value="4-HYDROXYBENZOATE SOLANESYLTRANSFERASE"/>
    <property type="match status" value="1"/>
</dbReference>
<dbReference type="PANTHER" id="PTHR43448">
    <property type="entry name" value="PROTOHEME IX FARNESYLTRANSFERASE, MITOCHONDRIAL"/>
    <property type="match status" value="1"/>
</dbReference>
<dbReference type="Pfam" id="PF01040">
    <property type="entry name" value="UbiA"/>
    <property type="match status" value="1"/>
</dbReference>
<dbReference type="PROSITE" id="PS00943">
    <property type="entry name" value="UBIA"/>
    <property type="match status" value="1"/>
</dbReference>
<comment type="function">
    <text evidence="1">Converts heme B (protoheme IX) to heme O by substitution of the vinyl group on carbon 2 of heme B porphyrin ring with a hydroxyethyl farnesyl side group.</text>
</comment>
<comment type="catalytic activity">
    <reaction evidence="1">
        <text>heme b + (2E,6E)-farnesyl diphosphate + H2O = Fe(II)-heme o + diphosphate</text>
        <dbReference type="Rhea" id="RHEA:28070"/>
        <dbReference type="ChEBI" id="CHEBI:15377"/>
        <dbReference type="ChEBI" id="CHEBI:33019"/>
        <dbReference type="ChEBI" id="CHEBI:60344"/>
        <dbReference type="ChEBI" id="CHEBI:60530"/>
        <dbReference type="ChEBI" id="CHEBI:175763"/>
        <dbReference type="EC" id="2.5.1.141"/>
    </reaction>
</comment>
<comment type="pathway">
    <text evidence="1">Porphyrin-containing compound metabolism; heme O biosynthesis; heme O from protoheme: step 1/1.</text>
</comment>
<comment type="subcellular location">
    <subcellularLocation>
        <location evidence="1">Cell inner membrane</location>
        <topology evidence="1">Multi-pass membrane protein</topology>
    </subcellularLocation>
</comment>
<comment type="miscellaneous">
    <text evidence="1">Carbon 2 of the heme B porphyrin ring is defined according to the Fischer nomenclature.</text>
</comment>
<comment type="similarity">
    <text evidence="1">Belongs to the UbiA prenyltransferase family. Protoheme IX farnesyltransferase subfamily.</text>
</comment>
<accession>B1KM58</accession>
<sequence>MAKPLSISSSDTQSQPLQWRAYYEMTKPKVVALMLLTVLVGMCLALPGAVPLQPLIFGLLGIGMMAGAAAAFNHLIDRRIDGLMARTYNRPLPKGRVSITKALTFSISLAVLGFVLLYTLVNELTAWLTFASLLGYAVVYTAYLKRATPQNIVVGGLAGAMPPLLGWTSVTGEFHGNALLLVIIIFAWTPPHFWALAIHRKAEYAKVDIPMLPVTHGTEFTKTCILLYTILLAIACLLPVLVGMCGPLYLVGSTLLSCGFIYKSWELKFDDKPGLAMQVFRFSIYHLMLLFIVLLVDHYLWV</sequence>
<organism>
    <name type="scientific">Shewanella woodyi (strain ATCC 51908 / MS32)</name>
    <dbReference type="NCBI Taxonomy" id="392500"/>
    <lineage>
        <taxon>Bacteria</taxon>
        <taxon>Pseudomonadati</taxon>
        <taxon>Pseudomonadota</taxon>
        <taxon>Gammaproteobacteria</taxon>
        <taxon>Alteromonadales</taxon>
        <taxon>Shewanellaceae</taxon>
        <taxon>Shewanella</taxon>
    </lineage>
</organism>
<evidence type="ECO:0000255" key="1">
    <source>
        <dbReference type="HAMAP-Rule" id="MF_00154"/>
    </source>
</evidence>
<protein>
    <recommendedName>
        <fullName evidence="1">Protoheme IX farnesyltransferase 1</fullName>
        <ecNumber evidence="1">2.5.1.141</ecNumber>
    </recommendedName>
    <alternativeName>
        <fullName evidence="1">Heme B farnesyltransferase 1</fullName>
    </alternativeName>
    <alternativeName>
        <fullName evidence="1">Heme O synthase 1</fullName>
    </alternativeName>
</protein>
<reference key="1">
    <citation type="submission" date="2008-02" db="EMBL/GenBank/DDBJ databases">
        <title>Complete sequence of Shewanella woodyi ATCC 51908.</title>
        <authorList>
            <consortium name="US DOE Joint Genome Institute"/>
            <person name="Copeland A."/>
            <person name="Lucas S."/>
            <person name="Lapidus A."/>
            <person name="Glavina del Rio T."/>
            <person name="Dalin E."/>
            <person name="Tice H."/>
            <person name="Bruce D."/>
            <person name="Goodwin L."/>
            <person name="Pitluck S."/>
            <person name="Sims D."/>
            <person name="Brettin T."/>
            <person name="Detter J.C."/>
            <person name="Han C."/>
            <person name="Kuske C.R."/>
            <person name="Schmutz J."/>
            <person name="Larimer F."/>
            <person name="Land M."/>
            <person name="Hauser L."/>
            <person name="Kyrpides N."/>
            <person name="Lykidis A."/>
            <person name="Zhao J.-S."/>
            <person name="Richardson P."/>
        </authorList>
    </citation>
    <scope>NUCLEOTIDE SEQUENCE [LARGE SCALE GENOMIC DNA]</scope>
    <source>
        <strain>ATCC 51908 / MS32</strain>
    </source>
</reference>
<proteinExistence type="inferred from homology"/>
<feature type="chain" id="PRO_0000346017" description="Protoheme IX farnesyltransferase 1">
    <location>
        <begin position="1"/>
        <end position="302"/>
    </location>
</feature>
<feature type="transmembrane region" description="Helical" evidence="1">
    <location>
        <begin position="30"/>
        <end position="50"/>
    </location>
</feature>
<feature type="transmembrane region" description="Helical" evidence="1">
    <location>
        <begin position="52"/>
        <end position="72"/>
    </location>
</feature>
<feature type="transmembrane region" description="Helical" evidence="1">
    <location>
        <begin position="102"/>
        <end position="122"/>
    </location>
</feature>
<feature type="transmembrane region" description="Helical" evidence="1">
    <location>
        <begin position="124"/>
        <end position="144"/>
    </location>
</feature>
<feature type="transmembrane region" description="Helical" evidence="1">
    <location>
        <begin position="152"/>
        <end position="172"/>
    </location>
</feature>
<feature type="transmembrane region" description="Helical" evidence="1">
    <location>
        <begin position="178"/>
        <end position="198"/>
    </location>
</feature>
<feature type="transmembrane region" description="Helical" evidence="1">
    <location>
        <begin position="224"/>
        <end position="244"/>
    </location>
</feature>
<feature type="transmembrane region" description="Helical" evidence="1">
    <location>
        <begin position="245"/>
        <end position="265"/>
    </location>
</feature>
<feature type="transmembrane region" description="Helical" evidence="1">
    <location>
        <begin position="282"/>
        <end position="302"/>
    </location>
</feature>
<keyword id="KW-0997">Cell inner membrane</keyword>
<keyword id="KW-1003">Cell membrane</keyword>
<keyword id="KW-0350">Heme biosynthesis</keyword>
<keyword id="KW-0472">Membrane</keyword>
<keyword id="KW-1185">Reference proteome</keyword>
<keyword id="KW-0808">Transferase</keyword>
<keyword id="KW-0812">Transmembrane</keyword>
<keyword id="KW-1133">Transmembrane helix</keyword>